<comment type="similarity">
    <text evidence="1">Belongs to the UPF0502 family.</text>
</comment>
<protein>
    <recommendedName>
        <fullName evidence="1">UPF0502 protein CPS_0106</fullName>
    </recommendedName>
</protein>
<reference key="1">
    <citation type="journal article" date="2005" name="Proc. Natl. Acad. Sci. U.S.A.">
        <title>The psychrophilic lifestyle as revealed by the genome sequence of Colwellia psychrerythraea 34H through genomic and proteomic analyses.</title>
        <authorList>
            <person name="Methe B.A."/>
            <person name="Nelson K.E."/>
            <person name="Deming J.W."/>
            <person name="Momen B."/>
            <person name="Melamud E."/>
            <person name="Zhang X."/>
            <person name="Moult J."/>
            <person name="Madupu R."/>
            <person name="Nelson W.C."/>
            <person name="Dodson R.J."/>
            <person name="Brinkac L.M."/>
            <person name="Daugherty S.C."/>
            <person name="Durkin A.S."/>
            <person name="DeBoy R.T."/>
            <person name="Kolonay J.F."/>
            <person name="Sullivan S.A."/>
            <person name="Zhou L."/>
            <person name="Davidsen T.M."/>
            <person name="Wu M."/>
            <person name="Huston A.L."/>
            <person name="Lewis M."/>
            <person name="Weaver B."/>
            <person name="Weidman J.F."/>
            <person name="Khouri H."/>
            <person name="Utterback T.R."/>
            <person name="Feldblyum T.V."/>
            <person name="Fraser C.M."/>
        </authorList>
    </citation>
    <scope>NUCLEOTIDE SEQUENCE [LARGE SCALE GENOMIC DNA]</scope>
    <source>
        <strain>34H / ATCC BAA-681</strain>
    </source>
</reference>
<gene>
    <name type="ordered locus">CPS_0106</name>
</gene>
<sequence>MITLSAEQCRIIGVMLEKETTTPEQYPLSLNGITTGCNQKSNRDPVMSLSESDVQNLVDELVQMNQLMVDQKASTRVNKYFHRFCDTEFGNLKFTPQQRAVICVLFLRGPQTPGELRTRTNRLADFADVSEVDNTLTQLQDLNGLTLVRKLEREPGKRESRYVHLLSDVDESSFTQAVTTQTEVVLSEEQTSLTQRVTELEQQVASLTEQINCITELLNDD</sequence>
<organism>
    <name type="scientific">Colwellia psychrerythraea (strain 34H / ATCC BAA-681)</name>
    <name type="common">Vibrio psychroerythus</name>
    <dbReference type="NCBI Taxonomy" id="167879"/>
    <lineage>
        <taxon>Bacteria</taxon>
        <taxon>Pseudomonadati</taxon>
        <taxon>Pseudomonadota</taxon>
        <taxon>Gammaproteobacteria</taxon>
        <taxon>Alteromonadales</taxon>
        <taxon>Colwelliaceae</taxon>
        <taxon>Colwellia</taxon>
    </lineage>
</organism>
<proteinExistence type="inferred from homology"/>
<name>Y106_COLP3</name>
<feature type="chain" id="PRO_0000309382" description="UPF0502 protein CPS_0106">
    <location>
        <begin position="1"/>
        <end position="221"/>
    </location>
</feature>
<accession>Q48AN9</accession>
<evidence type="ECO:0000255" key="1">
    <source>
        <dbReference type="HAMAP-Rule" id="MF_01584"/>
    </source>
</evidence>
<dbReference type="EMBL" id="CP000083">
    <property type="protein sequence ID" value="AAZ26005.1"/>
    <property type="molecule type" value="Genomic_DNA"/>
</dbReference>
<dbReference type="RefSeq" id="WP_011040981.1">
    <property type="nucleotide sequence ID" value="NC_003910.7"/>
</dbReference>
<dbReference type="SMR" id="Q48AN9"/>
<dbReference type="STRING" id="167879.CPS_0106"/>
<dbReference type="KEGG" id="cps:CPS_0106"/>
<dbReference type="eggNOG" id="COG3132">
    <property type="taxonomic scope" value="Bacteria"/>
</dbReference>
<dbReference type="HOGENOM" id="CLU_057831_2_0_6"/>
<dbReference type="Proteomes" id="UP000000547">
    <property type="component" value="Chromosome"/>
</dbReference>
<dbReference type="Gene3D" id="1.10.10.10">
    <property type="entry name" value="Winged helix-like DNA-binding domain superfamily/Winged helix DNA-binding domain"/>
    <property type="match status" value="2"/>
</dbReference>
<dbReference type="HAMAP" id="MF_01584">
    <property type="entry name" value="UPF0502"/>
    <property type="match status" value="1"/>
</dbReference>
<dbReference type="InterPro" id="IPR007432">
    <property type="entry name" value="DUF480"/>
</dbReference>
<dbReference type="InterPro" id="IPR036388">
    <property type="entry name" value="WH-like_DNA-bd_sf"/>
</dbReference>
<dbReference type="InterPro" id="IPR036390">
    <property type="entry name" value="WH_DNA-bd_sf"/>
</dbReference>
<dbReference type="PANTHER" id="PTHR38768">
    <property type="entry name" value="UPF0502 PROTEIN YCEH"/>
    <property type="match status" value="1"/>
</dbReference>
<dbReference type="PANTHER" id="PTHR38768:SF1">
    <property type="entry name" value="UPF0502 PROTEIN YCEH"/>
    <property type="match status" value="1"/>
</dbReference>
<dbReference type="Pfam" id="PF04337">
    <property type="entry name" value="DUF480"/>
    <property type="match status" value="1"/>
</dbReference>
<dbReference type="SUPFAM" id="SSF46785">
    <property type="entry name" value="Winged helix' DNA-binding domain"/>
    <property type="match status" value="2"/>
</dbReference>